<sequence length="143" mass="16388">MRLEKSLVLIKPDAVERNLIGKILEVYEGAGLKIKAMEMKQINKDFAEKHYEEHRDKQFFNSLIKYITRSPLVALILEGEDAIDKIRSLNGATNPEKAEFGTIRRRFALSGTENSVHASDSIESAEKEIKLWFPKVFYEEICG</sequence>
<keyword id="KW-0067">ATP-binding</keyword>
<keyword id="KW-0963">Cytoplasm</keyword>
<keyword id="KW-0418">Kinase</keyword>
<keyword id="KW-0460">Magnesium</keyword>
<keyword id="KW-0479">Metal-binding</keyword>
<keyword id="KW-0546">Nucleotide metabolism</keyword>
<keyword id="KW-0547">Nucleotide-binding</keyword>
<keyword id="KW-0597">Phosphoprotein</keyword>
<keyword id="KW-0808">Transferase</keyword>
<feature type="chain" id="PRO_0000267774" description="Nucleoside diphosphate kinase">
    <location>
        <begin position="1"/>
        <end position="143"/>
    </location>
</feature>
<feature type="active site" description="Pros-phosphohistidine intermediate" evidence="1">
    <location>
        <position position="117"/>
    </location>
</feature>
<feature type="binding site" evidence="1">
    <location>
        <position position="11"/>
    </location>
    <ligand>
        <name>ATP</name>
        <dbReference type="ChEBI" id="CHEBI:30616"/>
    </ligand>
</feature>
<feature type="binding site" evidence="1">
    <location>
        <position position="59"/>
    </location>
    <ligand>
        <name>ATP</name>
        <dbReference type="ChEBI" id="CHEBI:30616"/>
    </ligand>
</feature>
<feature type="binding site" evidence="1">
    <location>
        <position position="87"/>
    </location>
    <ligand>
        <name>ATP</name>
        <dbReference type="ChEBI" id="CHEBI:30616"/>
    </ligand>
</feature>
<feature type="binding site" evidence="1">
    <location>
        <position position="93"/>
    </location>
    <ligand>
        <name>ATP</name>
        <dbReference type="ChEBI" id="CHEBI:30616"/>
    </ligand>
</feature>
<feature type="binding site" evidence="1">
    <location>
        <position position="104"/>
    </location>
    <ligand>
        <name>ATP</name>
        <dbReference type="ChEBI" id="CHEBI:30616"/>
    </ligand>
</feature>
<feature type="binding site" evidence="1">
    <location>
        <position position="114"/>
    </location>
    <ligand>
        <name>ATP</name>
        <dbReference type="ChEBI" id="CHEBI:30616"/>
    </ligand>
</feature>
<accession>Q0SRK8</accession>
<name>NDK_CLOPS</name>
<reference key="1">
    <citation type="journal article" date="2006" name="Genome Res.">
        <title>Skewed genomic variability in strains of the toxigenic bacterial pathogen, Clostridium perfringens.</title>
        <authorList>
            <person name="Myers G.S.A."/>
            <person name="Rasko D.A."/>
            <person name="Cheung J.K."/>
            <person name="Ravel J."/>
            <person name="Seshadri R."/>
            <person name="DeBoy R.T."/>
            <person name="Ren Q."/>
            <person name="Varga J."/>
            <person name="Awad M.M."/>
            <person name="Brinkac L.M."/>
            <person name="Daugherty S.C."/>
            <person name="Haft D.H."/>
            <person name="Dodson R.J."/>
            <person name="Madupu R."/>
            <person name="Nelson W.C."/>
            <person name="Rosovitz M.J."/>
            <person name="Sullivan S.A."/>
            <person name="Khouri H."/>
            <person name="Dimitrov G.I."/>
            <person name="Watkins K.L."/>
            <person name="Mulligan S."/>
            <person name="Benton J."/>
            <person name="Radune D."/>
            <person name="Fisher D.J."/>
            <person name="Atkins H.S."/>
            <person name="Hiscox T."/>
            <person name="Jost B.H."/>
            <person name="Billington S.J."/>
            <person name="Songer J.G."/>
            <person name="McClane B.A."/>
            <person name="Titball R.W."/>
            <person name="Rood J.I."/>
            <person name="Melville S.B."/>
            <person name="Paulsen I.T."/>
        </authorList>
    </citation>
    <scope>NUCLEOTIDE SEQUENCE [LARGE SCALE GENOMIC DNA]</scope>
    <source>
        <strain>SM101 / Type A</strain>
    </source>
</reference>
<evidence type="ECO:0000255" key="1">
    <source>
        <dbReference type="HAMAP-Rule" id="MF_00451"/>
    </source>
</evidence>
<comment type="function">
    <text evidence="1">Major role in the synthesis of nucleoside triphosphates other than ATP. The ATP gamma phosphate is transferred to the NDP beta phosphate via a ping-pong mechanism, using a phosphorylated active-site intermediate.</text>
</comment>
<comment type="catalytic activity">
    <reaction evidence="1">
        <text>a 2'-deoxyribonucleoside 5'-diphosphate + ATP = a 2'-deoxyribonucleoside 5'-triphosphate + ADP</text>
        <dbReference type="Rhea" id="RHEA:44640"/>
        <dbReference type="ChEBI" id="CHEBI:30616"/>
        <dbReference type="ChEBI" id="CHEBI:61560"/>
        <dbReference type="ChEBI" id="CHEBI:73316"/>
        <dbReference type="ChEBI" id="CHEBI:456216"/>
        <dbReference type="EC" id="2.7.4.6"/>
    </reaction>
</comment>
<comment type="catalytic activity">
    <reaction evidence="1">
        <text>a ribonucleoside 5'-diphosphate + ATP = a ribonucleoside 5'-triphosphate + ADP</text>
        <dbReference type="Rhea" id="RHEA:18113"/>
        <dbReference type="ChEBI" id="CHEBI:30616"/>
        <dbReference type="ChEBI" id="CHEBI:57930"/>
        <dbReference type="ChEBI" id="CHEBI:61557"/>
        <dbReference type="ChEBI" id="CHEBI:456216"/>
        <dbReference type="EC" id="2.7.4.6"/>
    </reaction>
</comment>
<comment type="cofactor">
    <cofactor evidence="1">
        <name>Mg(2+)</name>
        <dbReference type="ChEBI" id="CHEBI:18420"/>
    </cofactor>
</comment>
<comment type="subunit">
    <text evidence="1">Homotetramer.</text>
</comment>
<comment type="subcellular location">
    <subcellularLocation>
        <location evidence="1">Cytoplasm</location>
    </subcellularLocation>
</comment>
<comment type="similarity">
    <text evidence="1">Belongs to the NDK family.</text>
</comment>
<gene>
    <name evidence="1" type="primary">ndk</name>
    <name type="ordered locus">CPR_1939</name>
</gene>
<protein>
    <recommendedName>
        <fullName evidence="1">Nucleoside diphosphate kinase</fullName>
        <shortName evidence="1">NDK</shortName>
        <shortName evidence="1">NDP kinase</shortName>
        <ecNumber evidence="1">2.7.4.6</ecNumber>
    </recommendedName>
    <alternativeName>
        <fullName evidence="1">Nucleoside-2-P kinase</fullName>
    </alternativeName>
</protein>
<dbReference type="EC" id="2.7.4.6" evidence="1"/>
<dbReference type="EMBL" id="CP000312">
    <property type="protein sequence ID" value="ABG87368.1"/>
    <property type="molecule type" value="Genomic_DNA"/>
</dbReference>
<dbReference type="RefSeq" id="WP_011592810.1">
    <property type="nucleotide sequence ID" value="NC_008262.1"/>
</dbReference>
<dbReference type="SMR" id="Q0SRK8"/>
<dbReference type="KEGG" id="cpr:CPR_1939"/>
<dbReference type="Proteomes" id="UP000001824">
    <property type="component" value="Chromosome"/>
</dbReference>
<dbReference type="GO" id="GO:0005737">
    <property type="term" value="C:cytoplasm"/>
    <property type="evidence" value="ECO:0007669"/>
    <property type="project" value="UniProtKB-SubCell"/>
</dbReference>
<dbReference type="GO" id="GO:0005524">
    <property type="term" value="F:ATP binding"/>
    <property type="evidence" value="ECO:0007669"/>
    <property type="project" value="UniProtKB-UniRule"/>
</dbReference>
<dbReference type="GO" id="GO:0046872">
    <property type="term" value="F:metal ion binding"/>
    <property type="evidence" value="ECO:0007669"/>
    <property type="project" value="UniProtKB-KW"/>
</dbReference>
<dbReference type="GO" id="GO:0004550">
    <property type="term" value="F:nucleoside diphosphate kinase activity"/>
    <property type="evidence" value="ECO:0007669"/>
    <property type="project" value="UniProtKB-UniRule"/>
</dbReference>
<dbReference type="GO" id="GO:0006241">
    <property type="term" value="P:CTP biosynthetic process"/>
    <property type="evidence" value="ECO:0007669"/>
    <property type="project" value="UniProtKB-UniRule"/>
</dbReference>
<dbReference type="GO" id="GO:0006183">
    <property type="term" value="P:GTP biosynthetic process"/>
    <property type="evidence" value="ECO:0007669"/>
    <property type="project" value="UniProtKB-UniRule"/>
</dbReference>
<dbReference type="GO" id="GO:0006228">
    <property type="term" value="P:UTP biosynthetic process"/>
    <property type="evidence" value="ECO:0007669"/>
    <property type="project" value="UniProtKB-UniRule"/>
</dbReference>
<dbReference type="CDD" id="cd04413">
    <property type="entry name" value="NDPk_I"/>
    <property type="match status" value="1"/>
</dbReference>
<dbReference type="FunFam" id="3.30.70.141:FF:000003">
    <property type="entry name" value="Nucleoside diphosphate kinase"/>
    <property type="match status" value="1"/>
</dbReference>
<dbReference type="Gene3D" id="3.30.70.141">
    <property type="entry name" value="Nucleoside diphosphate kinase-like domain"/>
    <property type="match status" value="1"/>
</dbReference>
<dbReference type="HAMAP" id="MF_00451">
    <property type="entry name" value="NDP_kinase"/>
    <property type="match status" value="1"/>
</dbReference>
<dbReference type="InterPro" id="IPR034907">
    <property type="entry name" value="NDK-like_dom"/>
</dbReference>
<dbReference type="InterPro" id="IPR036850">
    <property type="entry name" value="NDK-like_dom_sf"/>
</dbReference>
<dbReference type="InterPro" id="IPR001564">
    <property type="entry name" value="Nucleoside_diP_kinase"/>
</dbReference>
<dbReference type="InterPro" id="IPR023005">
    <property type="entry name" value="Nucleoside_diP_kinase_AS"/>
</dbReference>
<dbReference type="NCBIfam" id="NF001908">
    <property type="entry name" value="PRK00668.1"/>
    <property type="match status" value="1"/>
</dbReference>
<dbReference type="PANTHER" id="PTHR11349">
    <property type="entry name" value="NUCLEOSIDE DIPHOSPHATE KINASE"/>
    <property type="match status" value="1"/>
</dbReference>
<dbReference type="Pfam" id="PF00334">
    <property type="entry name" value="NDK"/>
    <property type="match status" value="1"/>
</dbReference>
<dbReference type="PRINTS" id="PR01243">
    <property type="entry name" value="NUCDPKINASE"/>
</dbReference>
<dbReference type="SMART" id="SM00562">
    <property type="entry name" value="NDK"/>
    <property type="match status" value="1"/>
</dbReference>
<dbReference type="SUPFAM" id="SSF54919">
    <property type="entry name" value="Nucleoside diphosphate kinase, NDK"/>
    <property type="match status" value="1"/>
</dbReference>
<dbReference type="PROSITE" id="PS00469">
    <property type="entry name" value="NDPK"/>
    <property type="match status" value="1"/>
</dbReference>
<dbReference type="PROSITE" id="PS51374">
    <property type="entry name" value="NDPK_LIKE"/>
    <property type="match status" value="1"/>
</dbReference>
<organism>
    <name type="scientific">Clostridium perfringens (strain SM101 / Type A)</name>
    <dbReference type="NCBI Taxonomy" id="289380"/>
    <lineage>
        <taxon>Bacteria</taxon>
        <taxon>Bacillati</taxon>
        <taxon>Bacillota</taxon>
        <taxon>Clostridia</taxon>
        <taxon>Eubacteriales</taxon>
        <taxon>Clostridiaceae</taxon>
        <taxon>Clostridium</taxon>
    </lineage>
</organism>
<proteinExistence type="inferred from homology"/>